<name>KDSA_ECOSE</name>
<gene>
    <name evidence="1" type="primary">kdsA</name>
    <name type="ordered locus">ECSE_1265</name>
</gene>
<accession>B6I9T0</accession>
<reference key="1">
    <citation type="journal article" date="2008" name="DNA Res.">
        <title>Complete genome sequence and comparative analysis of the wild-type commensal Escherichia coli strain SE11 isolated from a healthy adult.</title>
        <authorList>
            <person name="Oshima K."/>
            <person name="Toh H."/>
            <person name="Ogura Y."/>
            <person name="Sasamoto H."/>
            <person name="Morita H."/>
            <person name="Park S.-H."/>
            <person name="Ooka T."/>
            <person name="Iyoda S."/>
            <person name="Taylor T.D."/>
            <person name="Hayashi T."/>
            <person name="Itoh K."/>
            <person name="Hattori M."/>
        </authorList>
    </citation>
    <scope>NUCLEOTIDE SEQUENCE [LARGE SCALE GENOMIC DNA]</scope>
    <source>
        <strain>SE11</strain>
    </source>
</reference>
<feature type="chain" id="PRO_1000091814" description="2-dehydro-3-deoxyphosphooctonate aldolase">
    <location>
        <begin position="1"/>
        <end position="284"/>
    </location>
</feature>
<comment type="catalytic activity">
    <reaction evidence="1">
        <text>D-arabinose 5-phosphate + phosphoenolpyruvate + H2O = 3-deoxy-alpha-D-manno-2-octulosonate-8-phosphate + phosphate</text>
        <dbReference type="Rhea" id="RHEA:14053"/>
        <dbReference type="ChEBI" id="CHEBI:15377"/>
        <dbReference type="ChEBI" id="CHEBI:43474"/>
        <dbReference type="ChEBI" id="CHEBI:57693"/>
        <dbReference type="ChEBI" id="CHEBI:58702"/>
        <dbReference type="ChEBI" id="CHEBI:85985"/>
        <dbReference type="EC" id="2.5.1.55"/>
    </reaction>
</comment>
<comment type="pathway">
    <text evidence="1">Carbohydrate biosynthesis; 3-deoxy-D-manno-octulosonate biosynthesis; 3-deoxy-D-manno-octulosonate from D-ribulose 5-phosphate: step 2/3.</text>
</comment>
<comment type="pathway">
    <text evidence="1">Bacterial outer membrane biogenesis; lipopolysaccharide biosynthesis.</text>
</comment>
<comment type="subcellular location">
    <subcellularLocation>
        <location evidence="1">Cytoplasm</location>
    </subcellularLocation>
</comment>
<comment type="similarity">
    <text evidence="1">Belongs to the KdsA family.</text>
</comment>
<dbReference type="EC" id="2.5.1.55" evidence="1"/>
<dbReference type="EMBL" id="AP009240">
    <property type="protein sequence ID" value="BAG76789.1"/>
    <property type="molecule type" value="Genomic_DNA"/>
</dbReference>
<dbReference type="RefSeq" id="WP_000811065.1">
    <property type="nucleotide sequence ID" value="NC_011415.1"/>
</dbReference>
<dbReference type="SMR" id="B6I9T0"/>
<dbReference type="GeneID" id="75203328"/>
<dbReference type="KEGG" id="ecy:ECSE_1265"/>
<dbReference type="HOGENOM" id="CLU_036666_0_0_6"/>
<dbReference type="UniPathway" id="UPA00030"/>
<dbReference type="UniPathway" id="UPA00357">
    <property type="reaction ID" value="UER00474"/>
</dbReference>
<dbReference type="Proteomes" id="UP000008199">
    <property type="component" value="Chromosome"/>
</dbReference>
<dbReference type="GO" id="GO:0005737">
    <property type="term" value="C:cytoplasm"/>
    <property type="evidence" value="ECO:0007669"/>
    <property type="project" value="UniProtKB-SubCell"/>
</dbReference>
<dbReference type="GO" id="GO:0008676">
    <property type="term" value="F:3-deoxy-8-phosphooctulonate synthase activity"/>
    <property type="evidence" value="ECO:0007669"/>
    <property type="project" value="UniProtKB-UniRule"/>
</dbReference>
<dbReference type="GO" id="GO:0019294">
    <property type="term" value="P:keto-3-deoxy-D-manno-octulosonic acid biosynthetic process"/>
    <property type="evidence" value="ECO:0007669"/>
    <property type="project" value="UniProtKB-UniRule"/>
</dbReference>
<dbReference type="FunFam" id="3.20.20.70:FF:000058">
    <property type="entry name" value="2-dehydro-3-deoxyphosphooctonate aldolase"/>
    <property type="match status" value="1"/>
</dbReference>
<dbReference type="Gene3D" id="3.20.20.70">
    <property type="entry name" value="Aldolase class I"/>
    <property type="match status" value="1"/>
</dbReference>
<dbReference type="HAMAP" id="MF_00056">
    <property type="entry name" value="KDO8P_synth"/>
    <property type="match status" value="1"/>
</dbReference>
<dbReference type="InterPro" id="IPR013785">
    <property type="entry name" value="Aldolase_TIM"/>
</dbReference>
<dbReference type="InterPro" id="IPR006218">
    <property type="entry name" value="DAHP1/KDSA"/>
</dbReference>
<dbReference type="InterPro" id="IPR006269">
    <property type="entry name" value="KDO8P_synthase"/>
</dbReference>
<dbReference type="NCBIfam" id="TIGR01362">
    <property type="entry name" value="KDO8P_synth"/>
    <property type="match status" value="1"/>
</dbReference>
<dbReference type="NCBIfam" id="NF003543">
    <property type="entry name" value="PRK05198.1"/>
    <property type="match status" value="1"/>
</dbReference>
<dbReference type="NCBIfam" id="NF009109">
    <property type="entry name" value="PRK12457.1"/>
    <property type="match status" value="1"/>
</dbReference>
<dbReference type="PANTHER" id="PTHR21057">
    <property type="entry name" value="PHOSPHO-2-DEHYDRO-3-DEOXYHEPTONATE ALDOLASE"/>
    <property type="match status" value="1"/>
</dbReference>
<dbReference type="Pfam" id="PF00793">
    <property type="entry name" value="DAHP_synth_1"/>
    <property type="match status" value="1"/>
</dbReference>
<dbReference type="SUPFAM" id="SSF51569">
    <property type="entry name" value="Aldolase"/>
    <property type="match status" value="1"/>
</dbReference>
<sequence length="284" mass="30833">MKQKVVSIGDINVANDLPFVLFGGMNVLESRDLAMRICEHYVTVTQKLGIPYVFKASFDKANRSSIHSYRGPGLEEGMKIFQELKQTFGVKIITDVHEPSQAQPVADVVDVIQLPAFLARQTDLVEAMAKTGAVINVKKPQFVSPGQMGNIVDKFKEGGNEKVILCDRGANFGYDNLVVDMLGFSIMKKVSGNSPVIFDVTHALQCRDPFGAASGGRRAQVAELARAGMAVGLAGLFIEAHPDPEHAKCDGPSALPLAKLEPFLKQMKAIDDLVKGFEELDTSK</sequence>
<organism>
    <name type="scientific">Escherichia coli (strain SE11)</name>
    <dbReference type="NCBI Taxonomy" id="409438"/>
    <lineage>
        <taxon>Bacteria</taxon>
        <taxon>Pseudomonadati</taxon>
        <taxon>Pseudomonadota</taxon>
        <taxon>Gammaproteobacteria</taxon>
        <taxon>Enterobacterales</taxon>
        <taxon>Enterobacteriaceae</taxon>
        <taxon>Escherichia</taxon>
    </lineage>
</organism>
<keyword id="KW-0963">Cytoplasm</keyword>
<keyword id="KW-0448">Lipopolysaccharide biosynthesis</keyword>
<keyword id="KW-0808">Transferase</keyword>
<evidence type="ECO:0000255" key="1">
    <source>
        <dbReference type="HAMAP-Rule" id="MF_00056"/>
    </source>
</evidence>
<protein>
    <recommendedName>
        <fullName evidence="1">2-dehydro-3-deoxyphosphooctonate aldolase</fullName>
        <ecNumber evidence="1">2.5.1.55</ecNumber>
    </recommendedName>
    <alternativeName>
        <fullName evidence="1">3-deoxy-D-manno-octulosonic acid 8-phosphate synthase</fullName>
    </alternativeName>
    <alternativeName>
        <fullName evidence="1">KDO-8-phosphate synthase</fullName>
        <shortName evidence="1">KDO 8-P synthase</shortName>
        <shortName evidence="1">KDOPS</shortName>
    </alternativeName>
    <alternativeName>
        <fullName evidence="1">Phospho-2-dehydro-3-deoxyoctonate aldolase</fullName>
    </alternativeName>
</protein>
<proteinExistence type="inferred from homology"/>